<protein>
    <recommendedName>
        <fullName>Kunitz-type serine protease inhibitor homolog beta-bungarotoxin B6 chain</fullName>
    </recommendedName>
</protein>
<sequence length="83" mass="9113">MSSGGLLLLLGLLRVCAELTPVSSKDPYCNLPPDPGPCHDNKFAFYHHPASNKCKEFVYGGCGGNDNRFKTRNKCQCTCSEYP</sequence>
<organism>
    <name type="scientific">Bungarus multicinctus</name>
    <name type="common">Many-banded krait</name>
    <dbReference type="NCBI Taxonomy" id="8616"/>
    <lineage>
        <taxon>Eukaryota</taxon>
        <taxon>Metazoa</taxon>
        <taxon>Chordata</taxon>
        <taxon>Craniata</taxon>
        <taxon>Vertebrata</taxon>
        <taxon>Euteleostomi</taxon>
        <taxon>Lepidosauria</taxon>
        <taxon>Squamata</taxon>
        <taxon>Bifurcata</taxon>
        <taxon>Unidentata</taxon>
        <taxon>Episquamata</taxon>
        <taxon>Toxicofera</taxon>
        <taxon>Serpentes</taxon>
        <taxon>Colubroidea</taxon>
        <taxon>Elapidae</taxon>
        <taxon>Bungarinae</taxon>
        <taxon>Bungarus</taxon>
    </lineage>
</organism>
<name>VKTH6_BUNMU</name>
<reference key="1">
    <citation type="journal article" date="2006" name="Toxicon">
        <title>Divergence of genes encoding B chains of beta-bungarotoxins.</title>
        <authorList>
            <person name="Cheng Y.-C."/>
            <person name="Chen K.-C."/>
            <person name="Lin S.-K."/>
            <person name="Chang L.-S."/>
        </authorList>
    </citation>
    <scope>NUCLEOTIDE SEQUENCE [GENOMIC DNA]</scope>
    <source>
        <tissue>Venom gland</tissue>
    </source>
</reference>
<feature type="signal peptide" evidence="1">
    <location>
        <begin position="1"/>
        <end position="24"/>
    </location>
</feature>
<feature type="chain" id="PRO_5000076284" description="Kunitz-type serine protease inhibitor homolog beta-bungarotoxin B6 chain">
    <location>
        <begin position="25"/>
        <end position="83"/>
    </location>
</feature>
<feature type="domain" description="BPTI/Kunitz inhibitor" evidence="2">
    <location>
        <begin position="29"/>
        <end position="79"/>
    </location>
</feature>
<feature type="disulfide bond" evidence="2">
    <location>
        <begin position="29"/>
        <end position="79"/>
    </location>
</feature>
<feature type="disulfide bond" evidence="2">
    <location>
        <begin position="38"/>
        <end position="62"/>
    </location>
</feature>
<feature type="disulfide bond" evidence="2">
    <location>
        <begin position="54"/>
        <end position="75"/>
    </location>
</feature>
<feature type="disulfide bond" description="Interchain (with an A chain)" evidence="2">
    <location>
        <position position="77"/>
    </location>
</feature>
<comment type="function">
    <text evidence="1">Beta-bungarotoxins are presynaptic neurotoxins of the venom. The B chain is homologous to venom basic protease inhibitors but has no protease inhibitor activity and blocks voltage-gated potassium channels (Kv) (By similarity).</text>
</comment>
<comment type="subunit">
    <text evidence="1">Heterodimer; disulfide-linked. The A chains have phospholipase A2 activity and the B chains show homology with the basic protease inhibitors (By similarity).</text>
</comment>
<comment type="subcellular location">
    <subcellularLocation>
        <location evidence="1">Secreted</location>
    </subcellularLocation>
</comment>
<comment type="tissue specificity">
    <text>Expressed by the venom gland.</text>
</comment>
<comment type="similarity">
    <text evidence="3">Belongs to the venom Kunitz-type family.</text>
</comment>
<accession>Q1RPS8</accession>
<dbReference type="EMBL" id="AM050154">
    <property type="protein sequence ID" value="CAJ18321.1"/>
    <property type="molecule type" value="Genomic_DNA"/>
</dbReference>
<dbReference type="SMR" id="Q1RPS8"/>
<dbReference type="GO" id="GO:0005615">
    <property type="term" value="C:extracellular space"/>
    <property type="evidence" value="ECO:0007669"/>
    <property type="project" value="TreeGrafter"/>
</dbReference>
<dbReference type="GO" id="GO:0015459">
    <property type="term" value="F:potassium channel regulator activity"/>
    <property type="evidence" value="ECO:0007669"/>
    <property type="project" value="UniProtKB-KW"/>
</dbReference>
<dbReference type="GO" id="GO:0004867">
    <property type="term" value="F:serine-type endopeptidase inhibitor activity"/>
    <property type="evidence" value="ECO:0007669"/>
    <property type="project" value="InterPro"/>
</dbReference>
<dbReference type="GO" id="GO:0090729">
    <property type="term" value="F:toxin activity"/>
    <property type="evidence" value="ECO:0007669"/>
    <property type="project" value="UniProtKB-KW"/>
</dbReference>
<dbReference type="FunFam" id="4.10.410.10:FF:000020">
    <property type="entry name" value="Collagen, type VI, alpha 3"/>
    <property type="match status" value="1"/>
</dbReference>
<dbReference type="Gene3D" id="4.10.410.10">
    <property type="entry name" value="Pancreatic trypsin inhibitor Kunitz domain"/>
    <property type="match status" value="1"/>
</dbReference>
<dbReference type="InterPro" id="IPR002223">
    <property type="entry name" value="Kunitz_BPTI"/>
</dbReference>
<dbReference type="InterPro" id="IPR036880">
    <property type="entry name" value="Kunitz_BPTI_sf"/>
</dbReference>
<dbReference type="InterPro" id="IPR020901">
    <property type="entry name" value="Prtase_inh_Kunz-CS"/>
</dbReference>
<dbReference type="InterPro" id="IPR050098">
    <property type="entry name" value="TFPI/VKTCI-like"/>
</dbReference>
<dbReference type="PANTHER" id="PTHR10083:SF383">
    <property type="entry name" value="BPTI_KUNITZ INHIBITOR DOMAIN-CONTAINING PROTEIN"/>
    <property type="match status" value="1"/>
</dbReference>
<dbReference type="PANTHER" id="PTHR10083">
    <property type="entry name" value="KUNITZ-TYPE PROTEASE INHIBITOR-RELATED"/>
    <property type="match status" value="1"/>
</dbReference>
<dbReference type="Pfam" id="PF00014">
    <property type="entry name" value="Kunitz_BPTI"/>
    <property type="match status" value="1"/>
</dbReference>
<dbReference type="PRINTS" id="PR00759">
    <property type="entry name" value="BASICPTASE"/>
</dbReference>
<dbReference type="SMART" id="SM00131">
    <property type="entry name" value="KU"/>
    <property type="match status" value="1"/>
</dbReference>
<dbReference type="SUPFAM" id="SSF57362">
    <property type="entry name" value="BPTI-like"/>
    <property type="match status" value="1"/>
</dbReference>
<dbReference type="PROSITE" id="PS00280">
    <property type="entry name" value="BPTI_KUNITZ_1"/>
    <property type="match status" value="1"/>
</dbReference>
<dbReference type="PROSITE" id="PS50279">
    <property type="entry name" value="BPTI_KUNITZ_2"/>
    <property type="match status" value="1"/>
</dbReference>
<keyword id="KW-1015">Disulfide bond</keyword>
<keyword id="KW-0872">Ion channel impairing toxin</keyword>
<keyword id="KW-0528">Neurotoxin</keyword>
<keyword id="KW-0632">Potassium channel impairing toxin</keyword>
<keyword id="KW-0638">Presynaptic neurotoxin</keyword>
<keyword id="KW-0964">Secreted</keyword>
<keyword id="KW-0732">Signal</keyword>
<keyword id="KW-0800">Toxin</keyword>
<keyword id="KW-1220">Voltage-gated potassium channel impairing toxin</keyword>
<proteinExistence type="inferred from homology"/>
<evidence type="ECO:0000250" key="1"/>
<evidence type="ECO:0000255" key="2">
    <source>
        <dbReference type="PROSITE-ProRule" id="PRU00031"/>
    </source>
</evidence>
<evidence type="ECO:0000305" key="3"/>